<sequence>MPIRVAIVSPEQEVWSGDADMVVARTTDGDLGVLPGHVPLLGLLAPGGTVRVKTGGREISASVDGGFISVTHQGVSILAETAKLT</sequence>
<comment type="function">
    <text evidence="1">Produces ATP from ADP in the presence of a proton gradient across the membrane.</text>
</comment>
<comment type="subunit">
    <text>F-type ATPases have 2 components, CF(1) - the catalytic core - and CF(0) - the membrane proton channel. CF(1) has five subunits: alpha(3), beta(3), gamma(1), delta(1), epsilon(1). CF(0) has three main subunits: a, b and c.</text>
</comment>
<comment type="subcellular location">
    <subcellularLocation>
        <location evidence="1">Cell membrane</location>
        <topology evidence="1">Peripheral membrane protein</topology>
    </subcellularLocation>
</comment>
<comment type="similarity">
    <text evidence="1">Belongs to the ATPase epsilon chain family.</text>
</comment>
<reference key="1">
    <citation type="journal article" date="2007" name="Genome Res.">
        <title>Genome characteristics of facultatively symbiotic Frankia sp. strains reflect host range and host plant biogeography.</title>
        <authorList>
            <person name="Normand P."/>
            <person name="Lapierre P."/>
            <person name="Tisa L.S."/>
            <person name="Gogarten J.P."/>
            <person name="Alloisio N."/>
            <person name="Bagnarol E."/>
            <person name="Bassi C.A."/>
            <person name="Berry A.M."/>
            <person name="Bickhart D.M."/>
            <person name="Choisne N."/>
            <person name="Couloux A."/>
            <person name="Cournoyer B."/>
            <person name="Cruveiller S."/>
            <person name="Daubin V."/>
            <person name="Demange N."/>
            <person name="Francino M.P."/>
            <person name="Goltsman E."/>
            <person name="Huang Y."/>
            <person name="Kopp O.R."/>
            <person name="Labarre L."/>
            <person name="Lapidus A."/>
            <person name="Lavire C."/>
            <person name="Marechal J."/>
            <person name="Martinez M."/>
            <person name="Mastronunzio J.E."/>
            <person name="Mullin B.C."/>
            <person name="Niemann J."/>
            <person name="Pujic P."/>
            <person name="Rawnsley T."/>
            <person name="Rouy Z."/>
            <person name="Schenowitz C."/>
            <person name="Sellstedt A."/>
            <person name="Tavares F."/>
            <person name="Tomkins J.P."/>
            <person name="Vallenet D."/>
            <person name="Valverde C."/>
            <person name="Wall L.G."/>
            <person name="Wang Y."/>
            <person name="Medigue C."/>
            <person name="Benson D.R."/>
        </authorList>
    </citation>
    <scope>NUCLEOTIDE SEQUENCE [LARGE SCALE GENOMIC DNA]</scope>
    <source>
        <strain>DSM 45818 / CECT 9043 / HFP020203 / CcI3</strain>
    </source>
</reference>
<evidence type="ECO:0000255" key="1">
    <source>
        <dbReference type="HAMAP-Rule" id="MF_00530"/>
    </source>
</evidence>
<protein>
    <recommendedName>
        <fullName evidence="1">ATP synthase epsilon chain</fullName>
    </recommendedName>
    <alternativeName>
        <fullName evidence="1">ATP synthase F1 sector epsilon subunit</fullName>
    </alternativeName>
    <alternativeName>
        <fullName evidence="1">F-ATPase epsilon subunit</fullName>
    </alternativeName>
</protein>
<feature type="chain" id="PRO_0000265816" description="ATP synthase epsilon chain">
    <location>
        <begin position="1"/>
        <end position="85"/>
    </location>
</feature>
<accession>Q2J6N4</accession>
<name>ATPE_FRACC</name>
<organism>
    <name type="scientific">Frankia casuarinae (strain DSM 45818 / CECT 9043 / HFP020203 / CcI3)</name>
    <dbReference type="NCBI Taxonomy" id="106370"/>
    <lineage>
        <taxon>Bacteria</taxon>
        <taxon>Bacillati</taxon>
        <taxon>Actinomycetota</taxon>
        <taxon>Actinomycetes</taxon>
        <taxon>Frankiales</taxon>
        <taxon>Frankiaceae</taxon>
        <taxon>Frankia</taxon>
    </lineage>
</organism>
<dbReference type="EMBL" id="CP000249">
    <property type="protein sequence ID" value="ABD13058.1"/>
    <property type="molecule type" value="Genomic_DNA"/>
</dbReference>
<dbReference type="RefSeq" id="WP_011438082.1">
    <property type="nucleotide sequence ID" value="NZ_MSEA01000054.1"/>
</dbReference>
<dbReference type="SMR" id="Q2J6N4"/>
<dbReference type="STRING" id="106370.Francci3_3706"/>
<dbReference type="KEGG" id="fra:Francci3_3706"/>
<dbReference type="eggNOG" id="COG0355">
    <property type="taxonomic scope" value="Bacteria"/>
</dbReference>
<dbReference type="HOGENOM" id="CLU_084338_4_0_11"/>
<dbReference type="OrthoDB" id="9791445at2"/>
<dbReference type="PhylomeDB" id="Q2J6N4"/>
<dbReference type="Proteomes" id="UP000001937">
    <property type="component" value="Chromosome"/>
</dbReference>
<dbReference type="GO" id="GO:0005886">
    <property type="term" value="C:plasma membrane"/>
    <property type="evidence" value="ECO:0007669"/>
    <property type="project" value="UniProtKB-SubCell"/>
</dbReference>
<dbReference type="GO" id="GO:0045259">
    <property type="term" value="C:proton-transporting ATP synthase complex"/>
    <property type="evidence" value="ECO:0007669"/>
    <property type="project" value="UniProtKB-KW"/>
</dbReference>
<dbReference type="GO" id="GO:0005524">
    <property type="term" value="F:ATP binding"/>
    <property type="evidence" value="ECO:0007669"/>
    <property type="project" value="UniProtKB-UniRule"/>
</dbReference>
<dbReference type="GO" id="GO:0046933">
    <property type="term" value="F:proton-transporting ATP synthase activity, rotational mechanism"/>
    <property type="evidence" value="ECO:0007669"/>
    <property type="project" value="UniProtKB-UniRule"/>
</dbReference>
<dbReference type="CDD" id="cd12152">
    <property type="entry name" value="F1-ATPase_delta"/>
    <property type="match status" value="1"/>
</dbReference>
<dbReference type="Gene3D" id="2.60.15.10">
    <property type="entry name" value="F0F1 ATP synthase delta/epsilon subunit, N-terminal"/>
    <property type="match status" value="1"/>
</dbReference>
<dbReference type="HAMAP" id="MF_00530">
    <property type="entry name" value="ATP_synth_epsil_bac"/>
    <property type="match status" value="1"/>
</dbReference>
<dbReference type="InterPro" id="IPR001469">
    <property type="entry name" value="ATP_synth_F1_dsu/esu"/>
</dbReference>
<dbReference type="InterPro" id="IPR020546">
    <property type="entry name" value="ATP_synth_F1_dsu/esu_N"/>
</dbReference>
<dbReference type="InterPro" id="IPR036771">
    <property type="entry name" value="ATPsynth_dsu/esu_N"/>
</dbReference>
<dbReference type="NCBIfam" id="TIGR01216">
    <property type="entry name" value="ATP_synt_epsi"/>
    <property type="match status" value="1"/>
</dbReference>
<dbReference type="NCBIfam" id="NF009977">
    <property type="entry name" value="PRK13442.1"/>
    <property type="match status" value="1"/>
</dbReference>
<dbReference type="PANTHER" id="PTHR13822">
    <property type="entry name" value="ATP SYNTHASE DELTA/EPSILON CHAIN"/>
    <property type="match status" value="1"/>
</dbReference>
<dbReference type="PANTHER" id="PTHR13822:SF10">
    <property type="entry name" value="ATP SYNTHASE EPSILON CHAIN, CHLOROPLASTIC"/>
    <property type="match status" value="1"/>
</dbReference>
<dbReference type="Pfam" id="PF02823">
    <property type="entry name" value="ATP-synt_DE_N"/>
    <property type="match status" value="1"/>
</dbReference>
<dbReference type="SUPFAM" id="SSF51344">
    <property type="entry name" value="Epsilon subunit of F1F0-ATP synthase N-terminal domain"/>
    <property type="match status" value="1"/>
</dbReference>
<gene>
    <name evidence="1" type="primary">atpC</name>
    <name type="ordered locus">Francci3_3706</name>
</gene>
<keyword id="KW-0066">ATP synthesis</keyword>
<keyword id="KW-1003">Cell membrane</keyword>
<keyword id="KW-0139">CF(1)</keyword>
<keyword id="KW-0375">Hydrogen ion transport</keyword>
<keyword id="KW-0406">Ion transport</keyword>
<keyword id="KW-0472">Membrane</keyword>
<keyword id="KW-1185">Reference proteome</keyword>
<keyword id="KW-0813">Transport</keyword>
<proteinExistence type="inferred from homology"/>